<feature type="chain" id="PRO_0000271089" description="Tigger transposable element-derived protein 2">
    <location>
        <begin position="1"/>
        <end position="525"/>
    </location>
</feature>
<feature type="domain" description="HTH psq-type" evidence="3">
    <location>
        <begin position="1"/>
        <end position="52"/>
    </location>
</feature>
<feature type="domain" description="HTH CENPB-type" evidence="4">
    <location>
        <begin position="67"/>
        <end position="139"/>
    </location>
</feature>
<feature type="domain" description="DDE-1" evidence="2">
    <location>
        <begin position="168"/>
        <end position="385"/>
    </location>
</feature>
<feature type="DNA-binding region" description="H-T-H motif" evidence="1">
    <location>
        <begin position="28"/>
        <end position="48"/>
    </location>
</feature>
<feature type="DNA-binding region" description="H-T-H motif" evidence="1">
    <location>
        <begin position="100"/>
        <end position="132"/>
    </location>
</feature>
<evidence type="ECO:0000250" key="1"/>
<evidence type="ECO:0000255" key="2"/>
<evidence type="ECO:0000255" key="3">
    <source>
        <dbReference type="PROSITE-ProRule" id="PRU00320"/>
    </source>
</evidence>
<evidence type="ECO:0000255" key="4">
    <source>
        <dbReference type="PROSITE-ProRule" id="PRU00583"/>
    </source>
</evidence>
<evidence type="ECO:0000305" key="5"/>
<protein>
    <recommendedName>
        <fullName>Tigger transposable element-derived protein 2</fullName>
    </recommendedName>
</protein>
<comment type="subcellular location">
    <subcellularLocation>
        <location evidence="3 4">Nucleus</location>
    </subcellularLocation>
</comment>
<comment type="similarity">
    <text evidence="5">Belongs to the tigger transposable element derived protein family.</text>
</comment>
<reference key="1">
    <citation type="journal article" date="2004" name="Genome Res.">
        <title>The status, quality, and expansion of the NIH full-length cDNA project: the Mammalian Gene Collection (MGC).</title>
        <authorList>
            <consortium name="The MGC Project Team"/>
        </authorList>
    </citation>
    <scope>NUCLEOTIDE SEQUENCE [LARGE SCALE MRNA]</scope>
    <source>
        <strain>Czech II</strain>
        <tissue>Brain</tissue>
        <tissue>Mammary gland</tissue>
    </source>
</reference>
<gene>
    <name type="primary">Tigd2</name>
</gene>
<organism>
    <name type="scientific">Mus musculus</name>
    <name type="common">Mouse</name>
    <dbReference type="NCBI Taxonomy" id="10090"/>
    <lineage>
        <taxon>Eukaryota</taxon>
        <taxon>Metazoa</taxon>
        <taxon>Chordata</taxon>
        <taxon>Craniata</taxon>
        <taxon>Vertebrata</taxon>
        <taxon>Euteleostomi</taxon>
        <taxon>Mammalia</taxon>
        <taxon>Eutheria</taxon>
        <taxon>Euarchontoglires</taxon>
        <taxon>Glires</taxon>
        <taxon>Rodentia</taxon>
        <taxon>Myomorpha</taxon>
        <taxon>Muroidea</taxon>
        <taxon>Muridae</taxon>
        <taxon>Murinae</taxon>
        <taxon>Mus</taxon>
        <taxon>Mus</taxon>
    </lineage>
</organism>
<proteinExistence type="evidence at transcript level"/>
<name>TIGD2_MOUSE</name>
<accession>Q0VBL1</accession>
<accession>Q505P7</accession>
<accession>Q6NV77</accession>
<keyword id="KW-0238">DNA-binding</keyword>
<keyword id="KW-0539">Nucleus</keyword>
<keyword id="KW-1185">Reference proteome</keyword>
<dbReference type="EMBL" id="BC068272">
    <property type="protein sequence ID" value="AAH68272.1"/>
    <property type="molecule type" value="mRNA"/>
</dbReference>
<dbReference type="EMBL" id="BC094458">
    <property type="protein sequence ID" value="AAH94458.1"/>
    <property type="molecule type" value="mRNA"/>
</dbReference>
<dbReference type="EMBL" id="BC120592">
    <property type="protein sequence ID" value="AAI20593.1"/>
    <property type="molecule type" value="mRNA"/>
</dbReference>
<dbReference type="EMBL" id="BC125491">
    <property type="protein sequence ID" value="AAI25492.1"/>
    <property type="molecule type" value="mRNA"/>
</dbReference>
<dbReference type="CCDS" id="CCDS39500.1"/>
<dbReference type="RefSeq" id="NP_001074614.1">
    <property type="nucleotide sequence ID" value="NM_001081145.1"/>
</dbReference>
<dbReference type="SMR" id="Q0VBL1"/>
<dbReference type="BioGRID" id="212677">
    <property type="interactions" value="1"/>
</dbReference>
<dbReference type="FunCoup" id="Q0VBL1">
    <property type="interactions" value="967"/>
</dbReference>
<dbReference type="STRING" id="10090.ENSMUSP00000057223"/>
<dbReference type="iPTMnet" id="Q0VBL1"/>
<dbReference type="PhosphoSitePlus" id="Q0VBL1"/>
<dbReference type="PaxDb" id="10090-ENSMUSP00000057223"/>
<dbReference type="PeptideAtlas" id="Q0VBL1"/>
<dbReference type="ProteomicsDB" id="262821"/>
<dbReference type="Antibodypedia" id="65566">
    <property type="antibodies" value="19 antibodies from 10 providers"/>
</dbReference>
<dbReference type="Ensembl" id="ENSMUST00000062626.4">
    <property type="protein sequence ID" value="ENSMUSP00000057223.4"/>
    <property type="gene ID" value="ENSMUSG00000049232.4"/>
</dbReference>
<dbReference type="GeneID" id="68140"/>
<dbReference type="KEGG" id="mmu:68140"/>
<dbReference type="UCSC" id="uc009cdj.1">
    <property type="organism name" value="mouse"/>
</dbReference>
<dbReference type="AGR" id="MGI:1915390"/>
<dbReference type="CTD" id="166815"/>
<dbReference type="MGI" id="MGI:1915390">
    <property type="gene designation" value="Tigd2"/>
</dbReference>
<dbReference type="VEuPathDB" id="HostDB:ENSMUSG00000049232"/>
<dbReference type="eggNOG" id="KOG3105">
    <property type="taxonomic scope" value="Eukaryota"/>
</dbReference>
<dbReference type="GeneTree" id="ENSGT00940000162273"/>
<dbReference type="HOGENOM" id="CLU_018294_1_1_1"/>
<dbReference type="InParanoid" id="Q0VBL1"/>
<dbReference type="OMA" id="QWFDSQS"/>
<dbReference type="OrthoDB" id="125347at2759"/>
<dbReference type="PhylomeDB" id="Q0VBL1"/>
<dbReference type="TreeFam" id="TF101131"/>
<dbReference type="BioGRID-ORCS" id="68140">
    <property type="hits" value="1 hit in 76 CRISPR screens"/>
</dbReference>
<dbReference type="PRO" id="PR:Q0VBL1"/>
<dbReference type="Proteomes" id="UP000000589">
    <property type="component" value="Chromosome 6"/>
</dbReference>
<dbReference type="RNAct" id="Q0VBL1">
    <property type="molecule type" value="protein"/>
</dbReference>
<dbReference type="Bgee" id="ENSMUSG00000049232">
    <property type="expression patterns" value="Expressed in stroma of bone marrow and 225 other cell types or tissues"/>
</dbReference>
<dbReference type="GO" id="GO:0005634">
    <property type="term" value="C:nucleus"/>
    <property type="evidence" value="ECO:0007669"/>
    <property type="project" value="UniProtKB-SubCell"/>
</dbReference>
<dbReference type="GO" id="GO:0003677">
    <property type="term" value="F:DNA binding"/>
    <property type="evidence" value="ECO:0007669"/>
    <property type="project" value="UniProtKB-KW"/>
</dbReference>
<dbReference type="Gene3D" id="1.10.10.60">
    <property type="entry name" value="Homeodomain-like"/>
    <property type="match status" value="1"/>
</dbReference>
<dbReference type="Gene3D" id="1.10.10.10">
    <property type="entry name" value="Winged helix-like DNA-binding domain superfamily/Winged helix DNA-binding domain"/>
    <property type="match status" value="1"/>
</dbReference>
<dbReference type="InterPro" id="IPR050863">
    <property type="entry name" value="CenT-Element_Derived"/>
</dbReference>
<dbReference type="InterPro" id="IPR004875">
    <property type="entry name" value="DDE_SF_endonuclease_dom"/>
</dbReference>
<dbReference type="InterPro" id="IPR009057">
    <property type="entry name" value="Homeodomain-like_sf"/>
</dbReference>
<dbReference type="InterPro" id="IPR006600">
    <property type="entry name" value="HTH_CenpB_DNA-bd_dom"/>
</dbReference>
<dbReference type="InterPro" id="IPR007889">
    <property type="entry name" value="HTH_Psq"/>
</dbReference>
<dbReference type="InterPro" id="IPR036388">
    <property type="entry name" value="WH-like_DNA-bd_sf"/>
</dbReference>
<dbReference type="PANTHER" id="PTHR19303:SF22">
    <property type="entry name" value="TIGGER TRANSPOSABLE ELEMENT-DERIVED PROTEIN 2"/>
    <property type="match status" value="1"/>
</dbReference>
<dbReference type="PANTHER" id="PTHR19303">
    <property type="entry name" value="TRANSPOSON"/>
    <property type="match status" value="1"/>
</dbReference>
<dbReference type="Pfam" id="PF04218">
    <property type="entry name" value="CENP-B_N"/>
    <property type="match status" value="1"/>
</dbReference>
<dbReference type="Pfam" id="PF03184">
    <property type="entry name" value="DDE_1"/>
    <property type="match status" value="1"/>
</dbReference>
<dbReference type="Pfam" id="PF03221">
    <property type="entry name" value="HTH_Tnp_Tc5"/>
    <property type="match status" value="1"/>
</dbReference>
<dbReference type="SMART" id="SM00674">
    <property type="entry name" value="CENPB"/>
    <property type="match status" value="1"/>
</dbReference>
<dbReference type="SUPFAM" id="SSF46689">
    <property type="entry name" value="Homeodomain-like"/>
    <property type="match status" value="2"/>
</dbReference>
<dbReference type="PROSITE" id="PS51253">
    <property type="entry name" value="HTH_CENPB"/>
    <property type="match status" value="1"/>
</dbReference>
<dbReference type="PROSITE" id="PS50960">
    <property type="entry name" value="HTH_PSQ"/>
    <property type="match status" value="1"/>
</dbReference>
<sequence>MLGKRKRVVLTIKDKLDIIKKLEEGNSFKKLSVLYGIGESTVRDIKKNKERIINYANSSDPTSGVSKRKSMKSSTYEELDRVMIEWFNQQKTDGIPVSGTICAKQARFFFDALGMEGDFNASSGWLTRFKQRHGIPKAAGKGTKLKGDETAASEFCGNFQEFVERENLLPEQIYGADQTGLFWKCLPTRTLAFDTDQSTCEYRTSRERIIIMCCANATGSHKLNLCVVGKAKRPRAFKGTDLSNLPVTYFSQKSAWIEPSVLKQWFEKCFVPQVQKHLKSKGLREKAVLLLDFPAAHPAEELLSSDDGRIIVKYLPPNVTSLIQPMSQGVLTTVKRYYRAGLIQKYMDEGNDPKTFWKNLTVLDAIYEASRAWNQIRSNTITRAWKKLFPGNEENPSVSIDEGAILAANLATVLQNTEDCEHVNIENIEQWFDSRSSGSNCQVLADIVGAADRAKVTEQKPSRKTRKAELNPEKHISHKAALEWTENLLDYLEQQDDMLLSDKLVLRRLRTIIRRKQRIQNKSHL</sequence>